<feature type="chain" id="PRO_1000133883" description="Imidazolonepropionase">
    <location>
        <begin position="1"/>
        <end position="427"/>
    </location>
</feature>
<feature type="binding site" evidence="1">
    <location>
        <position position="81"/>
    </location>
    <ligand>
        <name>Fe(3+)</name>
        <dbReference type="ChEBI" id="CHEBI:29034"/>
    </ligand>
</feature>
<feature type="binding site" evidence="1">
    <location>
        <position position="81"/>
    </location>
    <ligand>
        <name>Zn(2+)</name>
        <dbReference type="ChEBI" id="CHEBI:29105"/>
    </ligand>
</feature>
<feature type="binding site" evidence="1">
    <location>
        <position position="83"/>
    </location>
    <ligand>
        <name>Fe(3+)</name>
        <dbReference type="ChEBI" id="CHEBI:29034"/>
    </ligand>
</feature>
<feature type="binding site" evidence="1">
    <location>
        <position position="83"/>
    </location>
    <ligand>
        <name>Zn(2+)</name>
        <dbReference type="ChEBI" id="CHEBI:29105"/>
    </ligand>
</feature>
<feature type="binding site" evidence="1">
    <location>
        <position position="90"/>
    </location>
    <ligand>
        <name>4-imidazolone-5-propanoate</name>
        <dbReference type="ChEBI" id="CHEBI:77893"/>
    </ligand>
</feature>
<feature type="binding site" evidence="1">
    <location>
        <position position="153"/>
    </location>
    <ligand>
        <name>4-imidazolone-5-propanoate</name>
        <dbReference type="ChEBI" id="CHEBI:77893"/>
    </ligand>
</feature>
<feature type="binding site" evidence="1">
    <location>
        <position position="153"/>
    </location>
    <ligand>
        <name>N-formimidoyl-L-glutamate</name>
        <dbReference type="ChEBI" id="CHEBI:58928"/>
    </ligand>
</feature>
<feature type="binding site" evidence="1">
    <location>
        <position position="186"/>
    </location>
    <ligand>
        <name>4-imidazolone-5-propanoate</name>
        <dbReference type="ChEBI" id="CHEBI:77893"/>
    </ligand>
</feature>
<feature type="binding site" evidence="1">
    <location>
        <position position="260"/>
    </location>
    <ligand>
        <name>Fe(3+)</name>
        <dbReference type="ChEBI" id="CHEBI:29034"/>
    </ligand>
</feature>
<feature type="binding site" evidence="1">
    <location>
        <position position="260"/>
    </location>
    <ligand>
        <name>Zn(2+)</name>
        <dbReference type="ChEBI" id="CHEBI:29105"/>
    </ligand>
</feature>
<feature type="binding site" evidence="1">
    <location>
        <position position="263"/>
    </location>
    <ligand>
        <name>4-imidazolone-5-propanoate</name>
        <dbReference type="ChEBI" id="CHEBI:77893"/>
    </ligand>
</feature>
<feature type="binding site" evidence="1">
    <location>
        <position position="335"/>
    </location>
    <ligand>
        <name>Fe(3+)</name>
        <dbReference type="ChEBI" id="CHEBI:29034"/>
    </ligand>
</feature>
<feature type="binding site" evidence="1">
    <location>
        <position position="335"/>
    </location>
    <ligand>
        <name>Zn(2+)</name>
        <dbReference type="ChEBI" id="CHEBI:29105"/>
    </ligand>
</feature>
<feature type="binding site" evidence="1">
    <location>
        <position position="337"/>
    </location>
    <ligand>
        <name>N-formimidoyl-L-glutamate</name>
        <dbReference type="ChEBI" id="CHEBI:58928"/>
    </ligand>
</feature>
<feature type="binding site" evidence="1">
    <location>
        <position position="339"/>
    </location>
    <ligand>
        <name>N-formimidoyl-L-glutamate</name>
        <dbReference type="ChEBI" id="CHEBI:58928"/>
    </ligand>
</feature>
<feature type="binding site" evidence="1">
    <location>
        <position position="340"/>
    </location>
    <ligand>
        <name>4-imidazolone-5-propanoate</name>
        <dbReference type="ChEBI" id="CHEBI:77893"/>
    </ligand>
</feature>
<keyword id="KW-0963">Cytoplasm</keyword>
<keyword id="KW-0369">Histidine metabolism</keyword>
<keyword id="KW-0378">Hydrolase</keyword>
<keyword id="KW-0408">Iron</keyword>
<keyword id="KW-0479">Metal-binding</keyword>
<keyword id="KW-0862">Zinc</keyword>
<dbReference type="EC" id="3.5.2.7" evidence="1"/>
<dbReference type="EMBL" id="CP001337">
    <property type="protein sequence ID" value="ACL24560.1"/>
    <property type="molecule type" value="Genomic_DNA"/>
</dbReference>
<dbReference type="RefSeq" id="WP_015940419.1">
    <property type="nucleotide sequence ID" value="NC_011831.1"/>
</dbReference>
<dbReference type="SMR" id="B8GA45"/>
<dbReference type="STRING" id="326427.Cagg_1659"/>
<dbReference type="KEGG" id="cag:Cagg_1659"/>
<dbReference type="eggNOG" id="COG1228">
    <property type="taxonomic scope" value="Bacteria"/>
</dbReference>
<dbReference type="HOGENOM" id="CLU_041647_0_1_0"/>
<dbReference type="UniPathway" id="UPA00379">
    <property type="reaction ID" value="UER00551"/>
</dbReference>
<dbReference type="Proteomes" id="UP000002508">
    <property type="component" value="Chromosome"/>
</dbReference>
<dbReference type="GO" id="GO:0005737">
    <property type="term" value="C:cytoplasm"/>
    <property type="evidence" value="ECO:0007669"/>
    <property type="project" value="UniProtKB-SubCell"/>
</dbReference>
<dbReference type="GO" id="GO:0050480">
    <property type="term" value="F:imidazolonepropionase activity"/>
    <property type="evidence" value="ECO:0007669"/>
    <property type="project" value="UniProtKB-UniRule"/>
</dbReference>
<dbReference type="GO" id="GO:0005506">
    <property type="term" value="F:iron ion binding"/>
    <property type="evidence" value="ECO:0007669"/>
    <property type="project" value="UniProtKB-UniRule"/>
</dbReference>
<dbReference type="GO" id="GO:0008270">
    <property type="term" value="F:zinc ion binding"/>
    <property type="evidence" value="ECO:0007669"/>
    <property type="project" value="UniProtKB-UniRule"/>
</dbReference>
<dbReference type="GO" id="GO:0019556">
    <property type="term" value="P:L-histidine catabolic process to glutamate and formamide"/>
    <property type="evidence" value="ECO:0007669"/>
    <property type="project" value="UniProtKB-UniPathway"/>
</dbReference>
<dbReference type="GO" id="GO:0019557">
    <property type="term" value="P:L-histidine catabolic process to glutamate and formate"/>
    <property type="evidence" value="ECO:0007669"/>
    <property type="project" value="UniProtKB-UniPathway"/>
</dbReference>
<dbReference type="CDD" id="cd01296">
    <property type="entry name" value="Imidazolone-5PH"/>
    <property type="match status" value="1"/>
</dbReference>
<dbReference type="FunFam" id="3.20.20.140:FF:000007">
    <property type="entry name" value="Imidazolonepropionase"/>
    <property type="match status" value="1"/>
</dbReference>
<dbReference type="Gene3D" id="3.20.20.140">
    <property type="entry name" value="Metal-dependent hydrolases"/>
    <property type="match status" value="1"/>
</dbReference>
<dbReference type="Gene3D" id="2.30.40.10">
    <property type="entry name" value="Urease, subunit C, domain 1"/>
    <property type="match status" value="1"/>
</dbReference>
<dbReference type="HAMAP" id="MF_00372">
    <property type="entry name" value="HutI"/>
    <property type="match status" value="1"/>
</dbReference>
<dbReference type="InterPro" id="IPR006680">
    <property type="entry name" value="Amidohydro-rel"/>
</dbReference>
<dbReference type="InterPro" id="IPR005920">
    <property type="entry name" value="HutI"/>
</dbReference>
<dbReference type="InterPro" id="IPR011059">
    <property type="entry name" value="Metal-dep_hydrolase_composite"/>
</dbReference>
<dbReference type="InterPro" id="IPR032466">
    <property type="entry name" value="Metal_Hydrolase"/>
</dbReference>
<dbReference type="InterPro" id="IPR054418">
    <property type="entry name" value="MQNX/HUTI_composite_N"/>
</dbReference>
<dbReference type="NCBIfam" id="TIGR01224">
    <property type="entry name" value="hutI"/>
    <property type="match status" value="1"/>
</dbReference>
<dbReference type="PANTHER" id="PTHR42752">
    <property type="entry name" value="IMIDAZOLONEPROPIONASE"/>
    <property type="match status" value="1"/>
</dbReference>
<dbReference type="PANTHER" id="PTHR42752:SF1">
    <property type="entry name" value="IMIDAZOLONEPROPIONASE-RELATED"/>
    <property type="match status" value="1"/>
</dbReference>
<dbReference type="Pfam" id="PF01979">
    <property type="entry name" value="Amidohydro_1"/>
    <property type="match status" value="1"/>
</dbReference>
<dbReference type="Pfam" id="PF22039">
    <property type="entry name" value="HUTI_composite_bact"/>
    <property type="match status" value="1"/>
</dbReference>
<dbReference type="SUPFAM" id="SSF51338">
    <property type="entry name" value="Composite domain of metallo-dependent hydrolases"/>
    <property type="match status" value="2"/>
</dbReference>
<dbReference type="SUPFAM" id="SSF51556">
    <property type="entry name" value="Metallo-dependent hydrolases"/>
    <property type="match status" value="1"/>
</dbReference>
<accession>B8GA45</accession>
<gene>
    <name evidence="1" type="primary">hutI</name>
    <name type="ordered locus">Cagg_1659</name>
</gene>
<evidence type="ECO:0000255" key="1">
    <source>
        <dbReference type="HAMAP-Rule" id="MF_00372"/>
    </source>
</evidence>
<comment type="function">
    <text evidence="1">Catalyzes the hydrolytic cleavage of the carbon-nitrogen bond in imidazolone-5-propanoate to yield N-formimidoyl-L-glutamate. It is the third step in the universal histidine degradation pathway.</text>
</comment>
<comment type="catalytic activity">
    <reaction evidence="1">
        <text>4-imidazolone-5-propanoate + H2O = N-formimidoyl-L-glutamate</text>
        <dbReference type="Rhea" id="RHEA:23660"/>
        <dbReference type="ChEBI" id="CHEBI:15377"/>
        <dbReference type="ChEBI" id="CHEBI:58928"/>
        <dbReference type="ChEBI" id="CHEBI:77893"/>
        <dbReference type="EC" id="3.5.2.7"/>
    </reaction>
</comment>
<comment type="cofactor">
    <cofactor evidence="1">
        <name>Zn(2+)</name>
        <dbReference type="ChEBI" id="CHEBI:29105"/>
    </cofactor>
    <cofactor evidence="1">
        <name>Fe(3+)</name>
        <dbReference type="ChEBI" id="CHEBI:29034"/>
    </cofactor>
    <text evidence="1">Binds 1 zinc or iron ion per subunit.</text>
</comment>
<comment type="pathway">
    <text evidence="1">Amino-acid degradation; L-histidine degradation into L-glutamate; N-formimidoyl-L-glutamate from L-histidine: step 3/3.</text>
</comment>
<comment type="subcellular location">
    <subcellularLocation>
        <location evidence="1">Cytoplasm</location>
    </subcellularLocation>
</comment>
<comment type="similarity">
    <text evidence="1">Belongs to the metallo-dependent hydrolases superfamily. HutI family.</text>
</comment>
<organism>
    <name type="scientific">Chloroflexus aggregans (strain MD-66 / DSM 9485)</name>
    <dbReference type="NCBI Taxonomy" id="326427"/>
    <lineage>
        <taxon>Bacteria</taxon>
        <taxon>Bacillati</taxon>
        <taxon>Chloroflexota</taxon>
        <taxon>Chloroflexia</taxon>
        <taxon>Chloroflexales</taxon>
        <taxon>Chloroflexineae</taxon>
        <taxon>Chloroflexaceae</taxon>
        <taxon>Chloroflexus</taxon>
    </lineage>
</organism>
<proteinExistence type="inferred from homology"/>
<sequence>MEPCDLLIHSATQLVTCAGPPGLRRGPAMRELGVIRDGAVAIRGSTIVAVGPGTDVRRRFRASHEIDARGRAVCPGLVDCHTHIVYAGDRVEEFEQRCAGATYQEIMAAGGGILRTMRLTRAATTTELVHAALPRLRQMLSFGTTTAEVKTGYGLERDAELRQLAAIALLDAAQPIELVPTFLAAHAVPPEFTGRADDYIDLVVESMLPLARDWYAVSSFAARAIPLFVDVFCERGAFDVAQSRRVLDAARSLGLPRKAHVDEFVELGGLAMALELGATSVDHLDVTGPSAFTALAASSTVAVLLPLVSLNLGLSHFAAARAMIDAGVAVALSTDANPGSAPSLSLPLTMAIACRYLRMLPAETLIATTVNAAYAIGRGGHVGALMPGMQADLLILAADDYRWLMYELGGMPVAQVIKRGQVVVTNE</sequence>
<reference key="1">
    <citation type="submission" date="2008-12" db="EMBL/GenBank/DDBJ databases">
        <title>Complete sequence of Chloroflexus aggregans DSM 9485.</title>
        <authorList>
            <consortium name="US DOE Joint Genome Institute"/>
            <person name="Lucas S."/>
            <person name="Copeland A."/>
            <person name="Lapidus A."/>
            <person name="Glavina del Rio T."/>
            <person name="Dalin E."/>
            <person name="Tice H."/>
            <person name="Pitluck S."/>
            <person name="Foster B."/>
            <person name="Larimer F."/>
            <person name="Land M."/>
            <person name="Hauser L."/>
            <person name="Kyrpides N."/>
            <person name="Mikhailova N."/>
            <person name="Bryant D.A."/>
            <person name="Richardson P."/>
        </authorList>
    </citation>
    <scope>NUCLEOTIDE SEQUENCE [LARGE SCALE GENOMIC DNA]</scope>
    <source>
        <strain>MD-66 / DSM 9485</strain>
    </source>
</reference>
<protein>
    <recommendedName>
        <fullName evidence="1">Imidazolonepropionase</fullName>
        <ecNumber evidence="1">3.5.2.7</ecNumber>
    </recommendedName>
    <alternativeName>
        <fullName evidence="1">Imidazolone-5-propionate hydrolase</fullName>
    </alternativeName>
</protein>
<name>HUTI_CHLAD</name>